<evidence type="ECO:0000255" key="1">
    <source>
        <dbReference type="HAMAP-Rule" id="MF_00406"/>
    </source>
</evidence>
<accession>B7M1Y3</accession>
<sequence length="151" mass="17033">MTTNTHTLQIEEILELLPHRFPFLLVDRVLDFEEGRFLRAVKNVSVNEPFFQGHFPGKPIFPGVLILEAMAQATGILAFKSVGKLEPGELYYFAGIDEARFKRPVVPGDQMIMEVTFEKTRRGLTRFKGVALVDGKVVCEATMMCARSREA</sequence>
<name>FABZ_ECO8A</name>
<dbReference type="EC" id="4.2.1.59" evidence="1"/>
<dbReference type="EMBL" id="CU928160">
    <property type="protein sequence ID" value="CAQ97067.1"/>
    <property type="molecule type" value="Genomic_DNA"/>
</dbReference>
<dbReference type="RefSeq" id="WP_000210739.1">
    <property type="nucleotide sequence ID" value="NC_011741.1"/>
</dbReference>
<dbReference type="SMR" id="B7M1Y3"/>
<dbReference type="GeneID" id="93777245"/>
<dbReference type="KEGG" id="ecr:ECIAI1_0180"/>
<dbReference type="HOGENOM" id="CLU_078912_1_0_6"/>
<dbReference type="GO" id="GO:0005737">
    <property type="term" value="C:cytoplasm"/>
    <property type="evidence" value="ECO:0007669"/>
    <property type="project" value="UniProtKB-SubCell"/>
</dbReference>
<dbReference type="GO" id="GO:0016020">
    <property type="term" value="C:membrane"/>
    <property type="evidence" value="ECO:0007669"/>
    <property type="project" value="GOC"/>
</dbReference>
<dbReference type="GO" id="GO:0019171">
    <property type="term" value="F:(3R)-hydroxyacyl-[acyl-carrier-protein] dehydratase activity"/>
    <property type="evidence" value="ECO:0007669"/>
    <property type="project" value="UniProtKB-EC"/>
</dbReference>
<dbReference type="GO" id="GO:0006633">
    <property type="term" value="P:fatty acid biosynthetic process"/>
    <property type="evidence" value="ECO:0007669"/>
    <property type="project" value="UniProtKB-UniRule"/>
</dbReference>
<dbReference type="GO" id="GO:0009245">
    <property type="term" value="P:lipid A biosynthetic process"/>
    <property type="evidence" value="ECO:0007669"/>
    <property type="project" value="UniProtKB-UniRule"/>
</dbReference>
<dbReference type="CDD" id="cd01288">
    <property type="entry name" value="FabZ"/>
    <property type="match status" value="1"/>
</dbReference>
<dbReference type="FunFam" id="3.10.129.10:FF:000001">
    <property type="entry name" value="3-hydroxyacyl-[acyl-carrier-protein] dehydratase FabZ"/>
    <property type="match status" value="1"/>
</dbReference>
<dbReference type="Gene3D" id="3.10.129.10">
    <property type="entry name" value="Hotdog Thioesterase"/>
    <property type="match status" value="1"/>
</dbReference>
<dbReference type="HAMAP" id="MF_00406">
    <property type="entry name" value="FabZ"/>
    <property type="match status" value="1"/>
</dbReference>
<dbReference type="InterPro" id="IPR013114">
    <property type="entry name" value="FabA_FabZ"/>
</dbReference>
<dbReference type="InterPro" id="IPR010084">
    <property type="entry name" value="FabZ"/>
</dbReference>
<dbReference type="InterPro" id="IPR029069">
    <property type="entry name" value="HotDog_dom_sf"/>
</dbReference>
<dbReference type="NCBIfam" id="TIGR01750">
    <property type="entry name" value="fabZ"/>
    <property type="match status" value="1"/>
</dbReference>
<dbReference type="NCBIfam" id="NF000582">
    <property type="entry name" value="PRK00006.1"/>
    <property type="match status" value="1"/>
</dbReference>
<dbReference type="PANTHER" id="PTHR30272">
    <property type="entry name" value="3-HYDROXYACYL-[ACYL-CARRIER-PROTEIN] DEHYDRATASE"/>
    <property type="match status" value="1"/>
</dbReference>
<dbReference type="PANTHER" id="PTHR30272:SF1">
    <property type="entry name" value="3-HYDROXYACYL-[ACYL-CARRIER-PROTEIN] DEHYDRATASE"/>
    <property type="match status" value="1"/>
</dbReference>
<dbReference type="Pfam" id="PF07977">
    <property type="entry name" value="FabA"/>
    <property type="match status" value="1"/>
</dbReference>
<dbReference type="SUPFAM" id="SSF54637">
    <property type="entry name" value="Thioesterase/thiol ester dehydrase-isomerase"/>
    <property type="match status" value="1"/>
</dbReference>
<feature type="chain" id="PRO_1000197303" description="3-hydroxyacyl-[acyl-carrier-protein] dehydratase FabZ">
    <location>
        <begin position="1"/>
        <end position="151"/>
    </location>
</feature>
<feature type="active site" evidence="1">
    <location>
        <position position="54"/>
    </location>
</feature>
<keyword id="KW-0963">Cytoplasm</keyword>
<keyword id="KW-0441">Lipid A biosynthesis</keyword>
<keyword id="KW-0444">Lipid biosynthesis</keyword>
<keyword id="KW-0443">Lipid metabolism</keyword>
<keyword id="KW-0456">Lyase</keyword>
<protein>
    <recommendedName>
        <fullName evidence="1">3-hydroxyacyl-[acyl-carrier-protein] dehydratase FabZ</fullName>
        <ecNumber evidence="1">4.2.1.59</ecNumber>
    </recommendedName>
    <alternativeName>
        <fullName evidence="1">(3R)-hydroxymyristoyl-[acyl-carrier-protein] dehydratase</fullName>
        <shortName evidence="1">(3R)-hydroxymyristoyl-ACP dehydrase</shortName>
    </alternativeName>
    <alternativeName>
        <fullName evidence="1">Beta-hydroxyacyl-ACP dehydratase</fullName>
    </alternativeName>
</protein>
<comment type="function">
    <text evidence="1">Involved in unsaturated fatty acids biosynthesis. Catalyzes the dehydration of short chain beta-hydroxyacyl-ACPs and long chain saturated and unsaturated beta-hydroxyacyl-ACPs.</text>
</comment>
<comment type="catalytic activity">
    <reaction evidence="1">
        <text>a (3R)-hydroxyacyl-[ACP] = a (2E)-enoyl-[ACP] + H2O</text>
        <dbReference type="Rhea" id="RHEA:13097"/>
        <dbReference type="Rhea" id="RHEA-COMP:9925"/>
        <dbReference type="Rhea" id="RHEA-COMP:9945"/>
        <dbReference type="ChEBI" id="CHEBI:15377"/>
        <dbReference type="ChEBI" id="CHEBI:78784"/>
        <dbReference type="ChEBI" id="CHEBI:78827"/>
        <dbReference type="EC" id="4.2.1.59"/>
    </reaction>
</comment>
<comment type="subunit">
    <text evidence="1">Oligomer.</text>
</comment>
<comment type="subcellular location">
    <subcellularLocation>
        <location evidence="1">Cytoplasm</location>
    </subcellularLocation>
</comment>
<comment type="PTM">
    <text evidence="1">The N-terminus is blocked.</text>
</comment>
<comment type="similarity">
    <text evidence="1">Belongs to the thioester dehydratase family. FabZ subfamily.</text>
</comment>
<gene>
    <name evidence="1" type="primary">fabZ</name>
    <name type="ordered locus">ECIAI1_0180</name>
</gene>
<proteinExistence type="inferred from homology"/>
<reference key="1">
    <citation type="journal article" date="2009" name="PLoS Genet.">
        <title>Organised genome dynamics in the Escherichia coli species results in highly diverse adaptive paths.</title>
        <authorList>
            <person name="Touchon M."/>
            <person name="Hoede C."/>
            <person name="Tenaillon O."/>
            <person name="Barbe V."/>
            <person name="Baeriswyl S."/>
            <person name="Bidet P."/>
            <person name="Bingen E."/>
            <person name="Bonacorsi S."/>
            <person name="Bouchier C."/>
            <person name="Bouvet O."/>
            <person name="Calteau A."/>
            <person name="Chiapello H."/>
            <person name="Clermont O."/>
            <person name="Cruveiller S."/>
            <person name="Danchin A."/>
            <person name="Diard M."/>
            <person name="Dossat C."/>
            <person name="Karoui M.E."/>
            <person name="Frapy E."/>
            <person name="Garry L."/>
            <person name="Ghigo J.M."/>
            <person name="Gilles A.M."/>
            <person name="Johnson J."/>
            <person name="Le Bouguenec C."/>
            <person name="Lescat M."/>
            <person name="Mangenot S."/>
            <person name="Martinez-Jehanne V."/>
            <person name="Matic I."/>
            <person name="Nassif X."/>
            <person name="Oztas S."/>
            <person name="Petit M.A."/>
            <person name="Pichon C."/>
            <person name="Rouy Z."/>
            <person name="Ruf C.S."/>
            <person name="Schneider D."/>
            <person name="Tourret J."/>
            <person name="Vacherie B."/>
            <person name="Vallenet D."/>
            <person name="Medigue C."/>
            <person name="Rocha E.P.C."/>
            <person name="Denamur E."/>
        </authorList>
    </citation>
    <scope>NUCLEOTIDE SEQUENCE [LARGE SCALE GENOMIC DNA]</scope>
    <source>
        <strain>IAI1</strain>
    </source>
</reference>
<organism>
    <name type="scientific">Escherichia coli O8 (strain IAI1)</name>
    <dbReference type="NCBI Taxonomy" id="585034"/>
    <lineage>
        <taxon>Bacteria</taxon>
        <taxon>Pseudomonadati</taxon>
        <taxon>Pseudomonadota</taxon>
        <taxon>Gammaproteobacteria</taxon>
        <taxon>Enterobacterales</taxon>
        <taxon>Enterobacteriaceae</taxon>
        <taxon>Escherichia</taxon>
    </lineage>
</organism>